<feature type="chain" id="PRO_1000048505" description="DNA replication and repair protein RecF">
    <location>
        <begin position="1"/>
        <end position="371"/>
    </location>
</feature>
<feature type="binding site" evidence="1">
    <location>
        <begin position="30"/>
        <end position="37"/>
    </location>
    <ligand>
        <name>ATP</name>
        <dbReference type="ChEBI" id="CHEBI:30616"/>
    </ligand>
</feature>
<sequence length="371" mass="42965">MILKRISILNYKNLEQAELEFSPKMNCFIGQNGMGKTNLLDAVYYLSFCKSATNPIDSQNIRHEGEFFVIQGFYETDQGEPEEVYCGLKRRQKKQFKRNKKEYNRLSDHIGFIPLVMVSPADAELIAGGSDGRRRFMDVVISQYDKEYLDALIRYNKALTQRNALLKSEQEFDEELMLVWEEMMASAGEVVFKKRSEFIAEFIPTFQSFYSYISQDKEKVNLAYESHAMSGGLLDIIKESRRRDRVMGYSLKGVHKDDLIMQLGDFPIKREGSQGQNKTYLIALKLAQFDFLKKTGGNTTPLLLLDDIFDKLDAFRVEQIVKLVAGDRFGQIFITDTNRDHLDKILKKIEREYKVFAVEDGEVTERKEMAE</sequence>
<reference key="1">
    <citation type="journal article" date="2007" name="PLoS Biol.">
        <title>Evolution of symbiotic bacteria in the distal human intestine.</title>
        <authorList>
            <person name="Xu J."/>
            <person name="Mahowald M.A."/>
            <person name="Ley R.E."/>
            <person name="Lozupone C.A."/>
            <person name="Hamady M."/>
            <person name="Martens E.C."/>
            <person name="Henrissat B."/>
            <person name="Coutinho P.M."/>
            <person name="Minx P."/>
            <person name="Latreille P."/>
            <person name="Cordum H."/>
            <person name="Van Brunt A."/>
            <person name="Kim K."/>
            <person name="Fulton R.S."/>
            <person name="Fulton L.A."/>
            <person name="Clifton S.W."/>
            <person name="Wilson R.K."/>
            <person name="Knight R.D."/>
            <person name="Gordon J.I."/>
        </authorList>
    </citation>
    <scope>NUCLEOTIDE SEQUENCE [LARGE SCALE GENOMIC DNA]</scope>
    <source>
        <strain>ATCC 8482 / DSM 1447 / JCM 5826 / CCUG 4940 / NBRC 14291 / NCTC 11154</strain>
    </source>
</reference>
<protein>
    <recommendedName>
        <fullName evidence="1">DNA replication and repair protein RecF</fullName>
    </recommendedName>
</protein>
<accession>A6L3K9</accession>
<dbReference type="EMBL" id="CP000139">
    <property type="protein sequence ID" value="ABR40273.1"/>
    <property type="molecule type" value="Genomic_DNA"/>
</dbReference>
<dbReference type="RefSeq" id="WP_005847371.1">
    <property type="nucleotide sequence ID" value="NZ_JANSWM010000107.1"/>
</dbReference>
<dbReference type="SMR" id="A6L3K9"/>
<dbReference type="STRING" id="435590.BVU_2620"/>
<dbReference type="PaxDb" id="435590-BVU_2620"/>
<dbReference type="GeneID" id="5303583"/>
<dbReference type="KEGG" id="bvu:BVU_2620"/>
<dbReference type="eggNOG" id="COG1195">
    <property type="taxonomic scope" value="Bacteria"/>
</dbReference>
<dbReference type="HOGENOM" id="CLU_040267_0_1_10"/>
<dbReference type="BioCyc" id="BVUL435590:G1G59-2724-MONOMER"/>
<dbReference type="Proteomes" id="UP000002861">
    <property type="component" value="Chromosome"/>
</dbReference>
<dbReference type="GO" id="GO:0005737">
    <property type="term" value="C:cytoplasm"/>
    <property type="evidence" value="ECO:0007669"/>
    <property type="project" value="UniProtKB-SubCell"/>
</dbReference>
<dbReference type="GO" id="GO:0005524">
    <property type="term" value="F:ATP binding"/>
    <property type="evidence" value="ECO:0007669"/>
    <property type="project" value="UniProtKB-UniRule"/>
</dbReference>
<dbReference type="GO" id="GO:0003697">
    <property type="term" value="F:single-stranded DNA binding"/>
    <property type="evidence" value="ECO:0007669"/>
    <property type="project" value="UniProtKB-UniRule"/>
</dbReference>
<dbReference type="GO" id="GO:0006260">
    <property type="term" value="P:DNA replication"/>
    <property type="evidence" value="ECO:0007669"/>
    <property type="project" value="UniProtKB-UniRule"/>
</dbReference>
<dbReference type="GO" id="GO:0000731">
    <property type="term" value="P:DNA synthesis involved in DNA repair"/>
    <property type="evidence" value="ECO:0007669"/>
    <property type="project" value="TreeGrafter"/>
</dbReference>
<dbReference type="GO" id="GO:0006302">
    <property type="term" value="P:double-strand break repair"/>
    <property type="evidence" value="ECO:0007669"/>
    <property type="project" value="TreeGrafter"/>
</dbReference>
<dbReference type="GO" id="GO:0009432">
    <property type="term" value="P:SOS response"/>
    <property type="evidence" value="ECO:0007669"/>
    <property type="project" value="UniProtKB-UniRule"/>
</dbReference>
<dbReference type="Gene3D" id="3.40.50.300">
    <property type="entry name" value="P-loop containing nucleotide triphosphate hydrolases"/>
    <property type="match status" value="1"/>
</dbReference>
<dbReference type="Gene3D" id="1.20.1050.90">
    <property type="entry name" value="RecF/RecN/SMC, N-terminal domain"/>
    <property type="match status" value="1"/>
</dbReference>
<dbReference type="HAMAP" id="MF_00365">
    <property type="entry name" value="RecF"/>
    <property type="match status" value="1"/>
</dbReference>
<dbReference type="InterPro" id="IPR001238">
    <property type="entry name" value="DNA-binding_RecF"/>
</dbReference>
<dbReference type="InterPro" id="IPR018078">
    <property type="entry name" value="DNA-binding_RecF_CS"/>
</dbReference>
<dbReference type="InterPro" id="IPR027417">
    <property type="entry name" value="P-loop_NTPase"/>
</dbReference>
<dbReference type="InterPro" id="IPR003395">
    <property type="entry name" value="RecF/RecN/SMC_N"/>
</dbReference>
<dbReference type="InterPro" id="IPR042174">
    <property type="entry name" value="RecF_2"/>
</dbReference>
<dbReference type="NCBIfam" id="TIGR00611">
    <property type="entry name" value="recf"/>
    <property type="match status" value="1"/>
</dbReference>
<dbReference type="PANTHER" id="PTHR32182">
    <property type="entry name" value="DNA REPLICATION AND REPAIR PROTEIN RECF"/>
    <property type="match status" value="1"/>
</dbReference>
<dbReference type="PANTHER" id="PTHR32182:SF0">
    <property type="entry name" value="DNA REPLICATION AND REPAIR PROTEIN RECF"/>
    <property type="match status" value="1"/>
</dbReference>
<dbReference type="Pfam" id="PF02463">
    <property type="entry name" value="SMC_N"/>
    <property type="match status" value="1"/>
</dbReference>
<dbReference type="SUPFAM" id="SSF52540">
    <property type="entry name" value="P-loop containing nucleoside triphosphate hydrolases"/>
    <property type="match status" value="1"/>
</dbReference>
<dbReference type="PROSITE" id="PS00617">
    <property type="entry name" value="RECF_1"/>
    <property type="match status" value="1"/>
</dbReference>
<dbReference type="PROSITE" id="PS00618">
    <property type="entry name" value="RECF_2"/>
    <property type="match status" value="1"/>
</dbReference>
<name>RECF_PHOV8</name>
<organism>
    <name type="scientific">Phocaeicola vulgatus (strain ATCC 8482 / DSM 1447 / JCM 5826 / CCUG 4940 / NBRC 14291 / NCTC 11154)</name>
    <name type="common">Bacteroides vulgatus</name>
    <dbReference type="NCBI Taxonomy" id="435590"/>
    <lineage>
        <taxon>Bacteria</taxon>
        <taxon>Pseudomonadati</taxon>
        <taxon>Bacteroidota</taxon>
        <taxon>Bacteroidia</taxon>
        <taxon>Bacteroidales</taxon>
        <taxon>Bacteroidaceae</taxon>
        <taxon>Phocaeicola</taxon>
    </lineage>
</organism>
<evidence type="ECO:0000255" key="1">
    <source>
        <dbReference type="HAMAP-Rule" id="MF_00365"/>
    </source>
</evidence>
<comment type="function">
    <text evidence="1">The RecF protein is involved in DNA metabolism; it is required for DNA replication and normal SOS inducibility. RecF binds preferentially to single-stranded, linear DNA. It also seems to bind ATP.</text>
</comment>
<comment type="subcellular location">
    <subcellularLocation>
        <location evidence="1">Cytoplasm</location>
    </subcellularLocation>
</comment>
<comment type="similarity">
    <text evidence="1">Belongs to the RecF family.</text>
</comment>
<gene>
    <name evidence="1" type="primary">recF</name>
    <name type="ordered locus">BVU_2620</name>
</gene>
<proteinExistence type="inferred from homology"/>
<keyword id="KW-0067">ATP-binding</keyword>
<keyword id="KW-0963">Cytoplasm</keyword>
<keyword id="KW-0227">DNA damage</keyword>
<keyword id="KW-0234">DNA repair</keyword>
<keyword id="KW-0235">DNA replication</keyword>
<keyword id="KW-0238">DNA-binding</keyword>
<keyword id="KW-0547">Nucleotide-binding</keyword>
<keyword id="KW-0742">SOS response</keyword>